<organism>
    <name type="scientific">Rattus norvegicus</name>
    <name type="common">Rat</name>
    <dbReference type="NCBI Taxonomy" id="10116"/>
    <lineage>
        <taxon>Eukaryota</taxon>
        <taxon>Metazoa</taxon>
        <taxon>Chordata</taxon>
        <taxon>Craniata</taxon>
        <taxon>Vertebrata</taxon>
        <taxon>Euteleostomi</taxon>
        <taxon>Mammalia</taxon>
        <taxon>Eutheria</taxon>
        <taxon>Euarchontoglires</taxon>
        <taxon>Glires</taxon>
        <taxon>Rodentia</taxon>
        <taxon>Myomorpha</taxon>
        <taxon>Muroidea</taxon>
        <taxon>Muridae</taxon>
        <taxon>Murinae</taxon>
        <taxon>Rattus</taxon>
    </lineage>
</organism>
<protein>
    <recommendedName>
        <fullName>Deoxyribonuclease-2-beta</fullName>
        <ecNumber>3.1.22.1</ecNumber>
    </recommendedName>
    <alternativeName>
        <fullName>DNase II-like acid DNase</fullName>
    </alternativeName>
    <alternativeName>
        <fullName>DNase2-like acid DNase</fullName>
    </alternativeName>
    <alternativeName>
        <fullName>Deoxyribonuclease II beta</fullName>
        <shortName>DNase II beta</shortName>
    </alternativeName>
    <alternativeName>
        <fullName>Endonuclease DLAD</fullName>
    </alternativeName>
</protein>
<name>DNS2B_RAT</name>
<sequence>MTAQPLKAALPLLFVALSGVLGTPVISCINEDGKAVDWFAFYKLPRRTSRGGTGMGLDYLYLDSTMRTWSKSHHLINSSRSSLGRTLEQLYEAHNAKNDTAYLIYNDAVPASVNYSGNYGHAKGLLVWNRVQGFWLIHSIPKFPPVPEKGYEYPSSGRQYAQSGLCITLKYSQYETIDSQLLVFQPNIYSCFIPNIFRWELIHMPQMCAKSSASKIPSRRLTVLQSAQGLNFLHFAKSTFYTDDIFAAWIAQKLKVHLLVESWQRKNHELPSNCSLPYHVYNIKAIRGPLQSDFPSHHDHSKWCVSTKDSQARWTCIGDLNRSPHQALRSGGFICSKNRYIYQSFDRLVSHYASCN</sequence>
<dbReference type="EC" id="3.1.22.1"/>
<dbReference type="EMBL" id="AF178974">
    <property type="protein sequence ID" value="AAF13596.1"/>
    <property type="molecule type" value="mRNA"/>
</dbReference>
<dbReference type="PIR" id="JC7131">
    <property type="entry name" value="JC7131"/>
</dbReference>
<dbReference type="RefSeq" id="NP_067696.1">
    <property type="nucleotide sequence ID" value="NM_021664.1"/>
</dbReference>
<dbReference type="SMR" id="Q9QZK9"/>
<dbReference type="FunCoup" id="Q9QZK9">
    <property type="interactions" value="111"/>
</dbReference>
<dbReference type="STRING" id="10116.ENSRNOP00000021861"/>
<dbReference type="GlyCosmos" id="Q9QZK9">
    <property type="glycosylation" value="4 sites, No reported glycans"/>
</dbReference>
<dbReference type="GlyGen" id="Q9QZK9">
    <property type="glycosylation" value="4 sites"/>
</dbReference>
<dbReference type="PhosphoSitePlus" id="Q9QZK9"/>
<dbReference type="PaxDb" id="10116-ENSRNOP00000021861"/>
<dbReference type="GeneID" id="59296"/>
<dbReference type="KEGG" id="rno:59296"/>
<dbReference type="AGR" id="RGD:70901"/>
<dbReference type="CTD" id="58511"/>
<dbReference type="RGD" id="70901">
    <property type="gene designation" value="Dnase2b"/>
</dbReference>
<dbReference type="eggNOG" id="KOG3825">
    <property type="taxonomic scope" value="Eukaryota"/>
</dbReference>
<dbReference type="InParanoid" id="Q9QZK9"/>
<dbReference type="OrthoDB" id="10261598at2759"/>
<dbReference type="PhylomeDB" id="Q9QZK9"/>
<dbReference type="BRENDA" id="3.1.22.1">
    <property type="organism ID" value="5301"/>
</dbReference>
<dbReference type="PRO" id="PR:Q9QZK9"/>
<dbReference type="Proteomes" id="UP000002494">
    <property type="component" value="Unplaced"/>
</dbReference>
<dbReference type="GO" id="GO:0005737">
    <property type="term" value="C:cytoplasm"/>
    <property type="evidence" value="ECO:0000266"/>
    <property type="project" value="RGD"/>
</dbReference>
<dbReference type="GO" id="GO:0005576">
    <property type="term" value="C:extracellular region"/>
    <property type="evidence" value="ECO:0000266"/>
    <property type="project" value="RGD"/>
</dbReference>
<dbReference type="GO" id="GO:0005764">
    <property type="term" value="C:lysosome"/>
    <property type="evidence" value="ECO:0007669"/>
    <property type="project" value="UniProtKB-SubCell"/>
</dbReference>
<dbReference type="GO" id="GO:0004531">
    <property type="term" value="F:deoxyribonuclease II activity"/>
    <property type="evidence" value="ECO:0000314"/>
    <property type="project" value="RGD"/>
</dbReference>
<dbReference type="GO" id="GO:0004520">
    <property type="term" value="F:DNA endonuclease activity"/>
    <property type="evidence" value="ECO:0000266"/>
    <property type="project" value="RGD"/>
</dbReference>
<dbReference type="GO" id="GO:0006309">
    <property type="term" value="P:apoptotic DNA fragmentation"/>
    <property type="evidence" value="ECO:0000318"/>
    <property type="project" value="GO_Central"/>
</dbReference>
<dbReference type="InterPro" id="IPR004947">
    <property type="entry name" value="DNase_II"/>
</dbReference>
<dbReference type="PANTHER" id="PTHR10858">
    <property type="entry name" value="DEOXYRIBONUCLEASE II"/>
    <property type="match status" value="1"/>
</dbReference>
<dbReference type="PANTHER" id="PTHR10858:SF2">
    <property type="entry name" value="DEOXYRIBONUCLEASE-2-BETA"/>
    <property type="match status" value="1"/>
</dbReference>
<dbReference type="Pfam" id="PF03265">
    <property type="entry name" value="DNase_II"/>
    <property type="match status" value="1"/>
</dbReference>
<accession>Q9QZK9</accession>
<feature type="signal peptide" evidence="1">
    <location>
        <begin position="1"/>
        <end position="22"/>
    </location>
</feature>
<feature type="chain" id="PRO_0000007297" description="Deoxyribonuclease-2-beta">
    <location>
        <begin position="23"/>
        <end position="356"/>
    </location>
</feature>
<feature type="glycosylation site" description="N-linked (GlcNAc...) asparagine" evidence="1">
    <location>
        <position position="77"/>
    </location>
</feature>
<feature type="glycosylation site" description="N-linked (GlcNAc...) asparagine" evidence="1">
    <location>
        <position position="98"/>
    </location>
</feature>
<feature type="glycosylation site" description="N-linked (GlcNAc...) asparagine" evidence="1">
    <location>
        <position position="114"/>
    </location>
</feature>
<feature type="glycosylation site" description="N-linked (GlcNAc...) asparagine" evidence="1">
    <location>
        <position position="273"/>
    </location>
</feature>
<reference key="1">
    <citation type="journal article" date="1999" name="Biochem. Biophys. Res. Commun.">
        <title>Cloning of a cDNA encoding a rat DNase II-like acid DNase.</title>
        <authorList>
            <person name="Tanuma S."/>
            <person name="Shiokawa D."/>
        </authorList>
    </citation>
    <scope>NUCLEOTIDE SEQUENCE [MRNA]</scope>
    <scope>FUNCTION</scope>
    <scope>TISSUE SPECIFICITY</scope>
    <source>
        <strain>Wistar</strain>
        <tissue>Liver</tissue>
    </source>
</reference>
<reference key="2">
    <citation type="submission" date="2007-09" db="UniProtKB">
        <authorList>
            <person name="Lubec G."/>
            <person name="Kang S.U."/>
            <person name="Lubec S."/>
        </authorList>
    </citation>
    <scope>PROTEIN SEQUENCE OF 48-71 AND 211-219</scope>
    <scope>IDENTIFICATION BY MASS SPECTROMETRY</scope>
    <source>
        <strain>Sprague-Dawley</strain>
        <tissue>Brain</tissue>
    </source>
</reference>
<evidence type="ECO:0000255" key="1"/>
<evidence type="ECO:0000269" key="2">
    <source>
    </source>
</evidence>
<evidence type="ECO:0000305" key="3"/>
<proteinExistence type="evidence at protein level"/>
<comment type="function">
    <text evidence="2">Hydrolyzes DNA under acidic conditions. Does not require divalent cations for activity. Participates in the degradation of nuclear DNA during lens cell differentiation.</text>
</comment>
<comment type="catalytic activity">
    <reaction>
        <text>Endonucleolytic cleavage to nucleoside 3'-phosphates and 3'-phosphooligonucleotide end-products.</text>
        <dbReference type="EC" id="3.1.22.1"/>
    </reaction>
</comment>
<comment type="subcellular location">
    <subcellularLocation>
        <location evidence="3">Lysosome</location>
    </subcellularLocation>
</comment>
<comment type="tissue specificity">
    <text evidence="2">Liver specific.</text>
</comment>
<comment type="miscellaneous">
    <text>Inhibited by aurintricarboxylic acid and Zn(2+).</text>
</comment>
<comment type="similarity">
    <text evidence="3">Belongs to the DNase II family.</text>
</comment>
<keyword id="KW-0903">Direct protein sequencing</keyword>
<keyword id="KW-0255">Endonuclease</keyword>
<keyword id="KW-0325">Glycoprotein</keyword>
<keyword id="KW-0378">Hydrolase</keyword>
<keyword id="KW-0458">Lysosome</keyword>
<keyword id="KW-0540">Nuclease</keyword>
<keyword id="KW-1185">Reference proteome</keyword>
<keyword id="KW-0732">Signal</keyword>
<gene>
    <name type="primary">Dnase2b</name>
    <name type="synonym">Dlad</name>
</gene>